<comment type="function">
    <text evidence="2">Transcription factor required for TBX21/T-bet-dependent maturation of Th1 cells as well as maintenance of Th1-specific gene expression. Involved in embryogenesis and hematopoiesis (By similarity).</text>
</comment>
<comment type="subcellular location">
    <subcellularLocation>
        <location evidence="1 4">Nucleus</location>
    </subcellularLocation>
</comment>
<comment type="similarity">
    <text evidence="3">Belongs to the H2.0 homeobox family.</text>
</comment>
<name>HLX_RAT</name>
<feature type="chain" id="PRO_0000311700" description="H2.0-like homeobox protein">
    <location>
        <begin position="1"/>
        <end position="476"/>
    </location>
</feature>
<feature type="DNA-binding region" description="Homeobox" evidence="4">
    <location>
        <begin position="273"/>
        <end position="332"/>
    </location>
</feature>
<feature type="region of interest" description="Disordered" evidence="5">
    <location>
        <begin position="121"/>
        <end position="170"/>
    </location>
</feature>
<feature type="region of interest" description="Disordered" evidence="5">
    <location>
        <begin position="328"/>
        <end position="401"/>
    </location>
</feature>
<feature type="region of interest" description="Disordered" evidence="5">
    <location>
        <begin position="413"/>
        <end position="476"/>
    </location>
</feature>
<feature type="compositionally biased region" description="Low complexity" evidence="5">
    <location>
        <begin position="158"/>
        <end position="168"/>
    </location>
</feature>
<feature type="compositionally biased region" description="Basic and acidic residues" evidence="5">
    <location>
        <begin position="331"/>
        <end position="346"/>
    </location>
</feature>
<feature type="compositionally biased region" description="Basic and acidic residues" evidence="5">
    <location>
        <begin position="355"/>
        <end position="368"/>
    </location>
</feature>
<feature type="compositionally biased region" description="Acidic residues" evidence="5">
    <location>
        <begin position="369"/>
        <end position="379"/>
    </location>
</feature>
<feature type="compositionally biased region" description="Basic and acidic residues" evidence="5">
    <location>
        <begin position="386"/>
        <end position="397"/>
    </location>
</feature>
<feature type="compositionally biased region" description="Low complexity" evidence="5">
    <location>
        <begin position="413"/>
        <end position="446"/>
    </location>
</feature>
<feature type="compositionally biased region" description="Polar residues" evidence="5">
    <location>
        <begin position="455"/>
        <end position="464"/>
    </location>
</feature>
<gene>
    <name type="primary">Hlx</name>
    <name type="synonym">Hlx1</name>
</gene>
<accession>A0JPN1</accession>
<keyword id="KW-0221">Differentiation</keyword>
<keyword id="KW-0238">DNA-binding</keyword>
<keyword id="KW-0371">Homeobox</keyword>
<keyword id="KW-0539">Nucleus</keyword>
<keyword id="KW-1185">Reference proteome</keyword>
<keyword id="KW-0804">Transcription</keyword>
<keyword id="KW-0805">Transcription regulation</keyword>
<evidence type="ECO:0000250" key="1">
    <source>
        <dbReference type="UniProtKB" id="P52950"/>
    </source>
</evidence>
<evidence type="ECO:0000250" key="2">
    <source>
        <dbReference type="UniProtKB" id="Q61670"/>
    </source>
</evidence>
<evidence type="ECO:0000255" key="3"/>
<evidence type="ECO:0000255" key="4">
    <source>
        <dbReference type="PROSITE-ProRule" id="PRU00108"/>
    </source>
</evidence>
<evidence type="ECO:0000256" key="5">
    <source>
        <dbReference type="SAM" id="MobiDB-lite"/>
    </source>
</evidence>
<evidence type="ECO:0000312" key="6">
    <source>
        <dbReference type="EMBL" id="AAI27514.1"/>
    </source>
</evidence>
<reference evidence="6" key="1">
    <citation type="journal article" date="2004" name="Genome Res.">
        <title>The status, quality, and expansion of the NIH full-length cDNA project: the Mammalian Gene Collection (MGC).</title>
        <authorList>
            <consortium name="The MGC Project Team"/>
        </authorList>
    </citation>
    <scope>NUCLEOTIDE SEQUENCE [LARGE SCALE MRNA]</scope>
    <source>
        <tissue evidence="6">Lung</tissue>
    </source>
</reference>
<organism>
    <name type="scientific">Rattus norvegicus</name>
    <name type="common">Rat</name>
    <dbReference type="NCBI Taxonomy" id="10116"/>
    <lineage>
        <taxon>Eukaryota</taxon>
        <taxon>Metazoa</taxon>
        <taxon>Chordata</taxon>
        <taxon>Craniata</taxon>
        <taxon>Vertebrata</taxon>
        <taxon>Euteleostomi</taxon>
        <taxon>Mammalia</taxon>
        <taxon>Eutheria</taxon>
        <taxon>Euarchontoglires</taxon>
        <taxon>Glires</taxon>
        <taxon>Rodentia</taxon>
        <taxon>Myomorpha</taxon>
        <taxon>Muroidea</taxon>
        <taxon>Muridae</taxon>
        <taxon>Murinae</taxon>
        <taxon>Rattus</taxon>
    </lineage>
</organism>
<proteinExistence type="evidence at transcript level"/>
<dbReference type="EMBL" id="BC127513">
    <property type="protein sequence ID" value="AAI27514.1"/>
    <property type="molecule type" value="mRNA"/>
</dbReference>
<dbReference type="RefSeq" id="NP_001071142.1">
    <property type="nucleotide sequence ID" value="NM_001077674.1"/>
</dbReference>
<dbReference type="SMR" id="A0JPN1"/>
<dbReference type="FunCoup" id="A0JPN1">
    <property type="interactions" value="185"/>
</dbReference>
<dbReference type="STRING" id="10116.ENSRNOP00000003155"/>
<dbReference type="GlyGen" id="A0JPN1">
    <property type="glycosylation" value="1 site"/>
</dbReference>
<dbReference type="PhosphoSitePlus" id="A0JPN1"/>
<dbReference type="PaxDb" id="10116-ENSRNOP00000003155"/>
<dbReference type="Ensembl" id="ENSRNOT00000003155.6">
    <property type="protein sequence ID" value="ENSRNOP00000003155.3"/>
    <property type="gene ID" value="ENSRNOG00000002309.6"/>
</dbReference>
<dbReference type="GeneID" id="364069"/>
<dbReference type="KEGG" id="rno:364069"/>
<dbReference type="UCSC" id="RGD:1311961">
    <property type="organism name" value="rat"/>
</dbReference>
<dbReference type="AGR" id="RGD:1311961"/>
<dbReference type="CTD" id="3142"/>
<dbReference type="RGD" id="1311961">
    <property type="gene designation" value="Hlx"/>
</dbReference>
<dbReference type="eggNOG" id="KOG0488">
    <property type="taxonomic scope" value="Eukaryota"/>
</dbReference>
<dbReference type="GeneTree" id="ENSGT00950000183093"/>
<dbReference type="HOGENOM" id="CLU_043671_1_0_1"/>
<dbReference type="InParanoid" id="A0JPN1"/>
<dbReference type="OMA" id="VHHGGPF"/>
<dbReference type="OrthoDB" id="6159439at2759"/>
<dbReference type="PhylomeDB" id="A0JPN1"/>
<dbReference type="TreeFam" id="TF350735"/>
<dbReference type="PRO" id="PR:A0JPN1"/>
<dbReference type="Proteomes" id="UP000002494">
    <property type="component" value="Chromosome 13"/>
</dbReference>
<dbReference type="Bgee" id="ENSRNOG00000002309">
    <property type="expression patterns" value="Expressed in esophagus and 19 other cell types or tissues"/>
</dbReference>
<dbReference type="GO" id="GO:0005634">
    <property type="term" value="C:nucleus"/>
    <property type="evidence" value="ECO:0007669"/>
    <property type="project" value="UniProtKB-SubCell"/>
</dbReference>
<dbReference type="GO" id="GO:0000981">
    <property type="term" value="F:DNA-binding transcription factor activity, RNA polymerase II-specific"/>
    <property type="evidence" value="ECO:0007669"/>
    <property type="project" value="InterPro"/>
</dbReference>
<dbReference type="GO" id="GO:0043565">
    <property type="term" value="F:sequence-specific DNA binding"/>
    <property type="evidence" value="ECO:0000266"/>
    <property type="project" value="RGD"/>
</dbReference>
<dbReference type="GO" id="GO:0048513">
    <property type="term" value="P:animal organ development"/>
    <property type="evidence" value="ECO:0000266"/>
    <property type="project" value="RGD"/>
</dbReference>
<dbReference type="GO" id="GO:0008283">
    <property type="term" value="P:cell population proliferation"/>
    <property type="evidence" value="ECO:0000266"/>
    <property type="project" value="RGD"/>
</dbReference>
<dbReference type="GO" id="GO:0048557">
    <property type="term" value="P:embryonic digestive tract morphogenesis"/>
    <property type="evidence" value="ECO:0000266"/>
    <property type="project" value="RGD"/>
</dbReference>
<dbReference type="GO" id="GO:0048484">
    <property type="term" value="P:enteric nervous system development"/>
    <property type="evidence" value="ECO:0000266"/>
    <property type="project" value="RGD"/>
</dbReference>
<dbReference type="GO" id="GO:0050673">
    <property type="term" value="P:epithelial cell proliferation"/>
    <property type="evidence" value="ECO:0000266"/>
    <property type="project" value="RGD"/>
</dbReference>
<dbReference type="GO" id="GO:0001889">
    <property type="term" value="P:liver development"/>
    <property type="evidence" value="ECO:0000266"/>
    <property type="project" value="RGD"/>
</dbReference>
<dbReference type="GO" id="GO:0045629">
    <property type="term" value="P:negative regulation of T-helper 2 cell differentiation"/>
    <property type="evidence" value="ECO:0000266"/>
    <property type="project" value="RGD"/>
</dbReference>
<dbReference type="GO" id="GO:0035265">
    <property type="term" value="P:organ growth"/>
    <property type="evidence" value="ECO:0000266"/>
    <property type="project" value="RGD"/>
</dbReference>
<dbReference type="GO" id="GO:0050679">
    <property type="term" value="P:positive regulation of epithelial cell proliferation"/>
    <property type="evidence" value="ECO:0000266"/>
    <property type="project" value="RGD"/>
</dbReference>
<dbReference type="GO" id="GO:0046622">
    <property type="term" value="P:positive regulation of organ growth"/>
    <property type="evidence" value="ECO:0000266"/>
    <property type="project" value="RGD"/>
</dbReference>
<dbReference type="GO" id="GO:0045627">
    <property type="term" value="P:positive regulation of T-helper 1 cell differentiation"/>
    <property type="evidence" value="ECO:0000266"/>
    <property type="project" value="RGD"/>
</dbReference>
<dbReference type="GO" id="GO:0007519">
    <property type="term" value="P:skeletal muscle tissue development"/>
    <property type="evidence" value="ECO:0000266"/>
    <property type="project" value="RGD"/>
</dbReference>
<dbReference type="GO" id="GO:0045063">
    <property type="term" value="P:T-helper 1 cell differentiation"/>
    <property type="evidence" value="ECO:0000266"/>
    <property type="project" value="RGD"/>
</dbReference>
<dbReference type="GO" id="GO:0045064">
    <property type="term" value="P:T-helper 2 cell differentiation"/>
    <property type="evidence" value="ECO:0000266"/>
    <property type="project" value="RGD"/>
</dbReference>
<dbReference type="CDD" id="cd00086">
    <property type="entry name" value="homeodomain"/>
    <property type="match status" value="1"/>
</dbReference>
<dbReference type="FunFam" id="1.10.10.60:FF:000249">
    <property type="entry name" value="H2.0-like homeobox protein"/>
    <property type="match status" value="1"/>
</dbReference>
<dbReference type="Gene3D" id="1.10.10.60">
    <property type="entry name" value="Homeodomain-like"/>
    <property type="match status" value="1"/>
</dbReference>
<dbReference type="InterPro" id="IPR052497">
    <property type="entry name" value="H2.0_Homeobox_TF"/>
</dbReference>
<dbReference type="InterPro" id="IPR001356">
    <property type="entry name" value="HD"/>
</dbReference>
<dbReference type="InterPro" id="IPR020479">
    <property type="entry name" value="HD_metazoa"/>
</dbReference>
<dbReference type="InterPro" id="IPR017970">
    <property type="entry name" value="Homeobox_CS"/>
</dbReference>
<dbReference type="InterPro" id="IPR009057">
    <property type="entry name" value="Homeodomain-like_sf"/>
</dbReference>
<dbReference type="InterPro" id="IPR000047">
    <property type="entry name" value="HTH_motif"/>
</dbReference>
<dbReference type="PANTHER" id="PTHR46808">
    <property type="entry name" value="H2.0-LIKE HOMEOBOX PROTEIN"/>
    <property type="match status" value="1"/>
</dbReference>
<dbReference type="PANTHER" id="PTHR46808:SF1">
    <property type="entry name" value="H2.0-LIKE HOMEOBOX PROTEIN"/>
    <property type="match status" value="1"/>
</dbReference>
<dbReference type="Pfam" id="PF00046">
    <property type="entry name" value="Homeodomain"/>
    <property type="match status" value="1"/>
</dbReference>
<dbReference type="PRINTS" id="PR00024">
    <property type="entry name" value="HOMEOBOX"/>
</dbReference>
<dbReference type="PRINTS" id="PR00031">
    <property type="entry name" value="HTHREPRESSR"/>
</dbReference>
<dbReference type="SMART" id="SM00389">
    <property type="entry name" value="HOX"/>
    <property type="match status" value="1"/>
</dbReference>
<dbReference type="SUPFAM" id="SSF46689">
    <property type="entry name" value="Homeodomain-like"/>
    <property type="match status" value="1"/>
</dbReference>
<dbReference type="PROSITE" id="PS00027">
    <property type="entry name" value="HOMEOBOX_1"/>
    <property type="match status" value="1"/>
</dbReference>
<dbReference type="PROSITE" id="PS50071">
    <property type="entry name" value="HOMEOBOX_2"/>
    <property type="match status" value="1"/>
</dbReference>
<sequence length="476" mass="50027">MFAAGLAPFYASNFSLWSAAYCSSAGPGGCSFALDPAAVKKPSFCIADILHAGVGEPGPAAEGLVGASAALTAHLGSVHPHASFQAAARSPLRPTPVVAPSEVPAGFPQRLSPLSAAYHQHLPQQPPTQQQQPQQQPPPPPRAGSLQPPTSGTRVVPHHSGSAPAPSSKDLKFGIDRILSAEFDPKVKEGNTLRDLTSLLTGGRPTGVHLAGLQPSAGQFFASLDPISEASAILSPLSSNPRNSVQHQFQDTFPGPYAVLTKDTMPQTYKRKRSWSRAVFSNLQRKGLEKRFEIQKYVTKPDRKQLAAMLGLTDAQVKVWFQNRRMKWRHSKEAQAQKDKDKEAGEKPSGGVPAEGEREERSPSRSEGEAESESSDSESLDMAPSDTERTEGTERSLHQTTVIKASAAGALITASSSASGSSFSFSSSSSLGSSNGSAGSASSLGSNCSELLPSHQPSVTSGPQSPEIAQVPLAGL</sequence>
<protein>
    <recommendedName>
        <fullName>H2.0-like homeobox protein</fullName>
    </recommendedName>
    <alternativeName>
        <fullName>Homeobox protein HLX1</fullName>
    </alternativeName>
</protein>